<feature type="chain" id="PRO_0000395205" description="Flotillin-like protein 2">
    <location>
        <begin position="1"/>
        <end position="480"/>
    </location>
</feature>
<feature type="coiled-coil region" evidence="2">
    <location>
        <begin position="237"/>
        <end position="257"/>
    </location>
</feature>
<feature type="lipid moiety-binding region" description="S-palmitoyl cysteine" evidence="2">
    <location>
        <position position="37"/>
    </location>
</feature>
<proteinExistence type="evidence at transcript level"/>
<sequence length="480" mass="53180">MKIYRVAKASEYLVITGIFIKDIKLKKKAWIFPGQSCTVLDLSPVNYTFEVQAMSAEKLPFVLPAVFTIGPRVDDQESLLKYAKLISPHDRHSNHVNELVQGIIEGETRVLAASMTMEEVFRGTKQFKQEVFDKVQLELNQFGLLIYNANVKQLVDVPGHEYFSYLGQKTQMEAKNQARVDVSEAKMKGEIGSKLREGQTLQNAAKIDAETKVIAMQRAGEGEKEGIKVRTEVKVFENQREAEVAQANSELAKKKAAWTKAAQVAEVEAKKAVALREAELQGEVERMNALTTTEKLKADLLSKASVQYETKVQEANWELYKKQKETEAILYEKKAEAEAQKASADATFYASKQAAEAELYAKKKEAEGIVTLGQAQGAYVSTLLNALGNDYTAVRDYLMINGDMFQEIAKINAEAIRGLEPKISIWTNGGDNSGGITDGAMGMKEVAGVYKMLPPLFKTVHEQTGMLPPAWMGALSEKSS</sequence>
<evidence type="ECO:0000250" key="1"/>
<evidence type="ECO:0000255" key="2"/>
<evidence type="ECO:0000269" key="3">
    <source>
    </source>
</evidence>
<evidence type="ECO:0000305" key="4"/>
<name>FLOT2_MEDTR</name>
<organism>
    <name type="scientific">Medicago truncatula</name>
    <name type="common">Barrel medic</name>
    <name type="synonym">Medicago tribuloides</name>
    <dbReference type="NCBI Taxonomy" id="3880"/>
    <lineage>
        <taxon>Eukaryota</taxon>
        <taxon>Viridiplantae</taxon>
        <taxon>Streptophyta</taxon>
        <taxon>Embryophyta</taxon>
        <taxon>Tracheophyta</taxon>
        <taxon>Spermatophyta</taxon>
        <taxon>Magnoliopsida</taxon>
        <taxon>eudicotyledons</taxon>
        <taxon>Gunneridae</taxon>
        <taxon>Pentapetalae</taxon>
        <taxon>rosids</taxon>
        <taxon>fabids</taxon>
        <taxon>Fabales</taxon>
        <taxon>Fabaceae</taxon>
        <taxon>Papilionoideae</taxon>
        <taxon>50 kb inversion clade</taxon>
        <taxon>NPAAA clade</taxon>
        <taxon>Hologalegina</taxon>
        <taxon>IRL clade</taxon>
        <taxon>Trifolieae</taxon>
        <taxon>Medicago</taxon>
    </lineage>
</organism>
<keyword id="KW-1003">Cell membrane</keyword>
<keyword id="KW-0175">Coiled coil</keyword>
<keyword id="KW-0449">Lipoprotein</keyword>
<keyword id="KW-0472">Membrane</keyword>
<keyword id="KW-0536">Nodulation</keyword>
<keyword id="KW-0564">Palmitate</keyword>
<accession>D2XNQ9</accession>
<reference key="1">
    <citation type="journal article" date="2010" name="Proc. Natl. Acad. Sci. U.S.A.">
        <title>Plant flotillins are required for infection by nitrogen-fixing bacteria.</title>
        <authorList>
            <person name="Haney C.H."/>
            <person name="Long S.R."/>
        </authorList>
    </citation>
    <scope>NUCLEOTIDE SEQUENCE [MRNA]</scope>
    <scope>FUNCTION</scope>
    <scope>INDUCTION</scope>
    <scope>TISSUE SPECIFICITY</scope>
    <scope>SUBCELLULAR LOCATION</scope>
</reference>
<gene>
    <name type="primary">FLOT2</name>
</gene>
<comment type="function">
    <text evidence="1 3">May act as a scaffolding protein within caveolar membranes, functionally participating in formation of caveolae or caveolae-like vesicles (By similarity). Required for early symbiotic events and nodules formation.</text>
</comment>
<comment type="subcellular location">
    <subcellularLocation>
        <location evidence="4">Cell membrane</location>
        <topology evidence="4">Lipid-anchor</topology>
    </subcellularLocation>
    <subcellularLocation>
        <location evidence="1">Membrane</location>
        <location evidence="1">Caveola</location>
    </subcellularLocation>
    <text evidence="3">In puncta evenly distributed in the cell membrane of root hair cells and polarly localized in root epidermal cells. No changes of localization upon inoculation with bacteria.</text>
</comment>
<comment type="tissue specificity">
    <text evidence="3">Expressed in flowers in green pods. Primarily expressed in vascular tissues. Upon induction of nodulation, expansion of expression in the root cortex in the region of elongating root hairs, which will eventually become colonized by bacteria. Expressed in the infection zone in nodules.</text>
</comment>
<comment type="induction">
    <text evidence="3">Up-regulated during nodulation.</text>
</comment>
<comment type="PTM">
    <text evidence="4">May be palmitoylated.</text>
</comment>
<comment type="similarity">
    <text evidence="4">Belongs to the band 7/mec-2 family. Flotillin subfamily.</text>
</comment>
<dbReference type="EMBL" id="GU224279">
    <property type="protein sequence ID" value="ADA83095.1"/>
    <property type="molecule type" value="mRNA"/>
</dbReference>
<dbReference type="SMR" id="D2XNQ9"/>
<dbReference type="PaxDb" id="3880-AES73583"/>
<dbReference type="EnsemblPlants" id="rna19195">
    <property type="protein sequence ID" value="RHN70597.1"/>
    <property type="gene ID" value="gene19195"/>
</dbReference>
<dbReference type="GeneID" id="11426749"/>
<dbReference type="Gramene" id="rna19195">
    <property type="protein sequence ID" value="RHN70597.1"/>
    <property type="gene ID" value="gene19195"/>
</dbReference>
<dbReference type="KEGG" id="mtr:11426749"/>
<dbReference type="eggNOG" id="KOG2668">
    <property type="taxonomic scope" value="Eukaryota"/>
</dbReference>
<dbReference type="HOGENOM" id="CLU_030844_1_1_1"/>
<dbReference type="OMA" id="YLMINGD"/>
<dbReference type="OrthoDB" id="6080404at2759"/>
<dbReference type="ExpressionAtlas" id="D2XNQ9">
    <property type="expression patterns" value="differential"/>
</dbReference>
<dbReference type="GO" id="GO:0016324">
    <property type="term" value="C:apical plasma membrane"/>
    <property type="evidence" value="ECO:0000314"/>
    <property type="project" value="UniProtKB"/>
</dbReference>
<dbReference type="GO" id="GO:0005901">
    <property type="term" value="C:caveola"/>
    <property type="evidence" value="ECO:0007669"/>
    <property type="project" value="UniProtKB-SubCell"/>
</dbReference>
<dbReference type="GO" id="GO:0005886">
    <property type="term" value="C:plasma membrane"/>
    <property type="evidence" value="ECO:0000314"/>
    <property type="project" value="UniProtKB"/>
</dbReference>
<dbReference type="GO" id="GO:0009877">
    <property type="term" value="P:nodulation"/>
    <property type="evidence" value="ECO:0000315"/>
    <property type="project" value="UniProtKB"/>
</dbReference>
<dbReference type="CDD" id="cd03399">
    <property type="entry name" value="SPFH_flotillin"/>
    <property type="match status" value="1"/>
</dbReference>
<dbReference type="FunFam" id="3.30.479.30:FF:000015">
    <property type="entry name" value="Flotillin-like protein 2"/>
    <property type="match status" value="1"/>
</dbReference>
<dbReference type="Gene3D" id="3.30.479.30">
    <property type="entry name" value="Band 7 domain"/>
    <property type="match status" value="1"/>
</dbReference>
<dbReference type="InterPro" id="IPR001107">
    <property type="entry name" value="Band_7"/>
</dbReference>
<dbReference type="InterPro" id="IPR036013">
    <property type="entry name" value="Band_7/SPFH_dom_sf"/>
</dbReference>
<dbReference type="InterPro" id="IPR027705">
    <property type="entry name" value="Flotillin_fam"/>
</dbReference>
<dbReference type="PANTHER" id="PTHR13806:SF31">
    <property type="entry name" value="FLOTILLIN-LIKE PROTEIN 1-RELATED"/>
    <property type="match status" value="1"/>
</dbReference>
<dbReference type="PANTHER" id="PTHR13806">
    <property type="entry name" value="FLOTILLIN-RELATED"/>
    <property type="match status" value="1"/>
</dbReference>
<dbReference type="Pfam" id="PF01145">
    <property type="entry name" value="Band_7"/>
    <property type="match status" value="1"/>
</dbReference>
<dbReference type="SUPFAM" id="SSF117892">
    <property type="entry name" value="Band 7/SPFH domain"/>
    <property type="match status" value="1"/>
</dbReference>
<protein>
    <recommendedName>
        <fullName>Flotillin-like protein 2</fullName>
    </recommendedName>
</protein>